<sequence length="496" mass="53326">MPDVAVIPRPVLLETTDGPPFVLTAATILVVDSAPELVAVGVLAADLLGRLSGRPVEVRYTEGGAPSVVRLRLSEDLPAGDEAYRLVVSEHRVDIDARSAAGLVRAVVTLRQTVSSLGDGTLTVPALRVEDHPRYAWRGLSIDVARHFFTVDDLKAIIGLLAHYKLNVLHLHLTDDQGWRVHLPSRPHLTRASAGTSVGGGPGGFYNPAQLAEIVVARAARGIRVVPEIDVPGHVNAATHAYGDLTPSGEPTDVYTGIEVGFSRLHDDLPATRPFLRDVFTDLAAMTPGEYVHIGGDEVLTMDHDKYARLVGYAASVVRDAGKKVVGWQEISSTPLEPGTVVQYWDINADPAPFVAAAQAGAHVLMSPGSRAYLDMKYDATTELGLEWAGHIELRDAYDWEPSTLIPGVPPESVIGVEAAVWTETLTDLGELTSMLLPRLAAVAEVAWTAPQDRDWDDFSGRVAQHAPFWDRVGFRWHASPQVSWPGPGSAPGAAF</sequence>
<keyword id="KW-0119">Carbohydrate metabolism</keyword>
<keyword id="KW-0146">Chitin degradation</keyword>
<keyword id="KW-0903">Direct protein sequencing</keyword>
<keyword id="KW-0326">Glycosidase</keyword>
<keyword id="KW-0378">Hydrolase</keyword>
<keyword id="KW-0624">Polysaccharide degradation</keyword>
<protein>
    <recommendedName>
        <fullName>Beta-N-acetylhexosaminidase</fullName>
        <ecNumber>3.2.1.52</ecNumber>
    </recommendedName>
    <alternativeName>
        <fullName>Beta-N-acetylgalactosaminidase</fullName>
    </alternativeName>
    <alternativeName>
        <fullName>Beta-N-acetylglucosaminidase</fullName>
    </alternativeName>
    <alternativeName>
        <fullName>Hex20</fullName>
    </alternativeName>
</protein>
<name>HEX20_CELFI</name>
<gene>
    <name type="primary">hex20</name>
    <name type="synonym">hex20A</name>
</gene>
<dbReference type="EC" id="3.2.1.52"/>
<dbReference type="EMBL" id="AF478459">
    <property type="protein sequence ID" value="AAQ05800.1"/>
    <property type="molecule type" value="Genomic_DNA"/>
</dbReference>
<dbReference type="SMR" id="Q7WUL4"/>
<dbReference type="CAZy" id="GH20">
    <property type="family name" value="Glycoside Hydrolase Family 20"/>
</dbReference>
<dbReference type="SABIO-RK" id="Q7WUL4"/>
<dbReference type="UniPathway" id="UPA00349"/>
<dbReference type="GO" id="GO:0016020">
    <property type="term" value="C:membrane"/>
    <property type="evidence" value="ECO:0007669"/>
    <property type="project" value="TreeGrafter"/>
</dbReference>
<dbReference type="GO" id="GO:0004563">
    <property type="term" value="F:beta-N-acetylhexosaminidase activity"/>
    <property type="evidence" value="ECO:0007669"/>
    <property type="project" value="UniProtKB-EC"/>
</dbReference>
<dbReference type="GO" id="GO:0006032">
    <property type="term" value="P:chitin catabolic process"/>
    <property type="evidence" value="ECO:0007669"/>
    <property type="project" value="UniProtKB-UniPathway"/>
</dbReference>
<dbReference type="GO" id="GO:0030203">
    <property type="term" value="P:glycosaminoglycan metabolic process"/>
    <property type="evidence" value="ECO:0007669"/>
    <property type="project" value="TreeGrafter"/>
</dbReference>
<dbReference type="GO" id="GO:0000272">
    <property type="term" value="P:polysaccharide catabolic process"/>
    <property type="evidence" value="ECO:0007669"/>
    <property type="project" value="UniProtKB-KW"/>
</dbReference>
<dbReference type="CDD" id="cd06568">
    <property type="entry name" value="GH20_SpHex_like"/>
    <property type="match status" value="1"/>
</dbReference>
<dbReference type="Gene3D" id="3.30.379.10">
    <property type="entry name" value="Chitobiase/beta-hexosaminidase domain 2-like"/>
    <property type="match status" value="1"/>
</dbReference>
<dbReference type="Gene3D" id="3.20.20.80">
    <property type="entry name" value="Glycosidases"/>
    <property type="match status" value="1"/>
</dbReference>
<dbReference type="InterPro" id="IPR025705">
    <property type="entry name" value="Beta_hexosaminidase_sua/sub"/>
</dbReference>
<dbReference type="InterPro" id="IPR015883">
    <property type="entry name" value="Glyco_hydro_20_cat"/>
</dbReference>
<dbReference type="InterPro" id="IPR017853">
    <property type="entry name" value="Glycoside_hydrolase_SF"/>
</dbReference>
<dbReference type="InterPro" id="IPR029018">
    <property type="entry name" value="Hex-like_dom2"/>
</dbReference>
<dbReference type="InterPro" id="IPR015882">
    <property type="entry name" value="HEX_bac_N"/>
</dbReference>
<dbReference type="PANTHER" id="PTHR22600">
    <property type="entry name" value="BETA-HEXOSAMINIDASE"/>
    <property type="match status" value="1"/>
</dbReference>
<dbReference type="PANTHER" id="PTHR22600:SF57">
    <property type="entry name" value="BETA-N-ACETYLHEXOSAMINIDASE"/>
    <property type="match status" value="1"/>
</dbReference>
<dbReference type="Pfam" id="PF00728">
    <property type="entry name" value="Glyco_hydro_20"/>
    <property type="match status" value="1"/>
</dbReference>
<dbReference type="Pfam" id="PF02838">
    <property type="entry name" value="Glyco_hydro_20b"/>
    <property type="match status" value="1"/>
</dbReference>
<dbReference type="PRINTS" id="PR00738">
    <property type="entry name" value="GLHYDRLASE20"/>
</dbReference>
<dbReference type="SUPFAM" id="SSF51445">
    <property type="entry name" value="(Trans)glycosidases"/>
    <property type="match status" value="1"/>
</dbReference>
<dbReference type="SUPFAM" id="SSF55545">
    <property type="entry name" value="beta-N-acetylhexosaminidase-like domain"/>
    <property type="match status" value="1"/>
</dbReference>
<organism>
    <name type="scientific">Cellulomonas fimi</name>
    <dbReference type="NCBI Taxonomy" id="1708"/>
    <lineage>
        <taxon>Bacteria</taxon>
        <taxon>Bacillati</taxon>
        <taxon>Actinomycetota</taxon>
        <taxon>Actinomycetes</taxon>
        <taxon>Micrococcales</taxon>
        <taxon>Cellulomonadaceae</taxon>
        <taxon>Cellulomonas</taxon>
    </lineage>
</organism>
<proteinExistence type="evidence at protein level"/>
<reference key="1">
    <citation type="journal article" date="2006" name="FEBS J.">
        <title>Characterization of a beta-N-acetylhexosaminidase and a beta-N-acetylglucosaminidase/beta-glucosidase from Cellulomonas fimi.</title>
        <authorList>
            <person name="Mayer C."/>
            <person name="Vocadlo D.J."/>
            <person name="Mah M."/>
            <person name="Rupitz K."/>
            <person name="Stoll D."/>
            <person name="Warren R.A.J."/>
            <person name="Withers S.G."/>
        </authorList>
    </citation>
    <scope>NUCLEOTIDE SEQUENCE [GENOMIC DNA]</scope>
    <scope>PROTEIN SEQUENCE OF 1-10</scope>
    <scope>FUNCTION</scope>
    <scope>CATALYTIC ACTIVITY</scope>
    <scope>BIOPHYSICOCHEMICAL PROPERTIES</scope>
</reference>
<feature type="chain" id="PRO_0000252455" description="Beta-N-acetylhexosaminidase">
    <location>
        <begin position="1"/>
        <end position="496"/>
    </location>
</feature>
<feature type="active site" description="Proton donor" evidence="1">
    <location>
        <position position="298"/>
    </location>
</feature>
<evidence type="ECO:0000250" key="1"/>
<evidence type="ECO:0000269" key="2">
    <source>
    </source>
</evidence>
<evidence type="ECO:0000305" key="3"/>
<accession>Q7WUL4</accession>
<comment type="function">
    <text evidence="2">Catalyzes the cleavage of beta-N-acetylglucosaminides and beta-N-acetylgalactosaminides. Also catalyzes the hydrolysis of N-acetylchitooligomers. May be involved in chitin degradation. It is not able to cleave beta-glucosides.</text>
</comment>
<comment type="catalytic activity">
    <reaction evidence="2">
        <text>Hydrolysis of terminal non-reducing N-acetyl-D-hexosamine residues in N-acetyl-beta-D-hexosaminides.</text>
        <dbReference type="EC" id="3.2.1.52"/>
    </reaction>
</comment>
<comment type="biophysicochemical properties">
    <kinetics>
        <KM evidence="2">53 uM for 4'-nitrophenyl beta-N-acetyl-D-glucosaminide</KM>
        <KM evidence="2">66 uM for 4'-nitrophenyl beta-N-acetyl-D-galactosaminide</KM>
        <text>There is a 4-fold greater activity on 4'-nitrophenyl beta-N-acetyl-D-glucosaminide than on 4'-nitrophenyl beta-N-acetyl-D-galactosaminide.</text>
    </kinetics>
    <phDependence>
        <text evidence="2">Optimum pH is 7.3-8.7 with 4'-nitrophenyl beta-N-acetyl-D-glucosaminide as substrate. Rapidly inactivated above pH 9.5 and stable from pH 6.0 to 9.5.</text>
    </phDependence>
</comment>
<comment type="pathway">
    <text>Glycan degradation; chitin degradation.</text>
</comment>
<comment type="miscellaneous">
    <text>The reaction mechanism involves an oxazolinium ion intermediate.</text>
</comment>
<comment type="similarity">
    <text evidence="3">Belongs to the glycosyl hydrolase 20 family.</text>
</comment>